<accession>A9R6I9</accession>
<sequence length="272" mass="30282">MTTLACRKLAPHPESPRHQHAGPWLVWLHGLLGSGQDWLPVAQLCGDYPSLLIDLPGHGQSVSLSADGFADISRQLSQTLQANGIREYWLAGYSLGGRIAIYHACYGRHHGLQGLLVEGGNLGLENAELRQARLQQDRQWAQRFRQEPLPQVLDDWYQQAVFADLDPQQREQLVLLRADNHGPAVAEMLEATSLGHQPWLLPALQRLNVPYTYLCGDRDHKFLQLAQQYRLPLHTLARAGHNAHRANPGAFAAQVLAFLSQSSCLPPSSLSR</sequence>
<proteinExistence type="inferred from homology"/>
<gene>
    <name evidence="1" type="primary">menH</name>
    <name type="ordered locus">YpAngola_A1784</name>
</gene>
<protein>
    <recommendedName>
        <fullName evidence="1">2-succinyl-6-hydroxy-2,4-cyclohexadiene-1-carboxylate synthase</fullName>
        <shortName evidence="1">SHCHC synthase</shortName>
        <ecNumber evidence="1">4.2.99.20</ecNumber>
    </recommendedName>
</protein>
<feature type="chain" id="PRO_1000187125" description="2-succinyl-6-hydroxy-2,4-cyclohexadiene-1-carboxylate synthase">
    <location>
        <begin position="1"/>
        <end position="272"/>
    </location>
</feature>
<comment type="function">
    <text evidence="1">Catalyzes a proton abstraction reaction that results in 2,5-elimination of pyruvate from 2-succinyl-5-enolpyruvyl-6-hydroxy-3-cyclohexene-1-carboxylate (SEPHCHC) and the formation of 2-succinyl-6-hydroxy-2,4-cyclohexadiene-1-carboxylate (SHCHC).</text>
</comment>
<comment type="catalytic activity">
    <reaction evidence="1">
        <text>5-enolpyruvoyl-6-hydroxy-2-succinyl-cyclohex-3-ene-1-carboxylate = (1R,6R)-6-hydroxy-2-succinyl-cyclohexa-2,4-diene-1-carboxylate + pyruvate</text>
        <dbReference type="Rhea" id="RHEA:25597"/>
        <dbReference type="ChEBI" id="CHEBI:15361"/>
        <dbReference type="ChEBI" id="CHEBI:58689"/>
        <dbReference type="ChEBI" id="CHEBI:58818"/>
        <dbReference type="EC" id="4.2.99.20"/>
    </reaction>
</comment>
<comment type="pathway">
    <text evidence="1">Quinol/quinone metabolism; 1,4-dihydroxy-2-naphthoate biosynthesis; 1,4-dihydroxy-2-naphthoate from chorismate: step 3/7.</text>
</comment>
<comment type="pathway">
    <text evidence="1">Quinol/quinone metabolism; menaquinone biosynthesis.</text>
</comment>
<comment type="subunit">
    <text evidence="1">Monomer.</text>
</comment>
<comment type="similarity">
    <text evidence="1">Belongs to the AB hydrolase superfamily. MenH family.</text>
</comment>
<organism>
    <name type="scientific">Yersinia pestis bv. Antiqua (strain Angola)</name>
    <dbReference type="NCBI Taxonomy" id="349746"/>
    <lineage>
        <taxon>Bacteria</taxon>
        <taxon>Pseudomonadati</taxon>
        <taxon>Pseudomonadota</taxon>
        <taxon>Gammaproteobacteria</taxon>
        <taxon>Enterobacterales</taxon>
        <taxon>Yersiniaceae</taxon>
        <taxon>Yersinia</taxon>
    </lineage>
</organism>
<keyword id="KW-0456">Lyase</keyword>
<keyword id="KW-0474">Menaquinone biosynthesis</keyword>
<reference key="1">
    <citation type="journal article" date="2010" name="J. Bacteriol.">
        <title>Genome sequence of the deep-rooted Yersinia pestis strain Angola reveals new insights into the evolution and pangenome of the plague bacterium.</title>
        <authorList>
            <person name="Eppinger M."/>
            <person name="Worsham P.L."/>
            <person name="Nikolich M.P."/>
            <person name="Riley D.R."/>
            <person name="Sebastian Y."/>
            <person name="Mou S."/>
            <person name="Achtman M."/>
            <person name="Lindler L.E."/>
            <person name="Ravel J."/>
        </authorList>
    </citation>
    <scope>NUCLEOTIDE SEQUENCE [LARGE SCALE GENOMIC DNA]</scope>
    <source>
        <strain>Angola</strain>
    </source>
</reference>
<evidence type="ECO:0000255" key="1">
    <source>
        <dbReference type="HAMAP-Rule" id="MF_01660"/>
    </source>
</evidence>
<dbReference type="EC" id="4.2.99.20" evidence="1"/>
<dbReference type="EMBL" id="CP000901">
    <property type="protein sequence ID" value="ABX86540.1"/>
    <property type="molecule type" value="Genomic_DNA"/>
</dbReference>
<dbReference type="RefSeq" id="WP_002210246.1">
    <property type="nucleotide sequence ID" value="NZ_CP009935.1"/>
</dbReference>
<dbReference type="SMR" id="A9R6I9"/>
<dbReference type="ESTHER" id="yerpe-YPO2526">
    <property type="family name" value="MenH_SHCHC"/>
</dbReference>
<dbReference type="GeneID" id="57976161"/>
<dbReference type="KEGG" id="ypg:YpAngola_A1784"/>
<dbReference type="PATRIC" id="fig|349746.12.peg.2758"/>
<dbReference type="UniPathway" id="UPA00079"/>
<dbReference type="UniPathway" id="UPA01057">
    <property type="reaction ID" value="UER00900"/>
</dbReference>
<dbReference type="GO" id="GO:0070205">
    <property type="term" value="F:2-succinyl-6-hydroxy-2,4-cyclohexadiene-1-carboxylate synthase activity"/>
    <property type="evidence" value="ECO:0007669"/>
    <property type="project" value="UniProtKB-UniRule"/>
</dbReference>
<dbReference type="GO" id="GO:0009234">
    <property type="term" value="P:menaquinone biosynthetic process"/>
    <property type="evidence" value="ECO:0007669"/>
    <property type="project" value="UniProtKB-UniRule"/>
</dbReference>
<dbReference type="Gene3D" id="3.40.50.1820">
    <property type="entry name" value="alpha/beta hydrolase"/>
    <property type="match status" value="1"/>
</dbReference>
<dbReference type="HAMAP" id="MF_01660">
    <property type="entry name" value="MenH"/>
    <property type="match status" value="1"/>
</dbReference>
<dbReference type="InterPro" id="IPR000073">
    <property type="entry name" value="AB_hydrolase_1"/>
</dbReference>
<dbReference type="InterPro" id="IPR029058">
    <property type="entry name" value="AB_hydrolase_fold"/>
</dbReference>
<dbReference type="InterPro" id="IPR022485">
    <property type="entry name" value="SHCHC_synthase_MenH"/>
</dbReference>
<dbReference type="NCBIfam" id="TIGR03695">
    <property type="entry name" value="menH_SHCHC"/>
    <property type="match status" value="1"/>
</dbReference>
<dbReference type="NCBIfam" id="NF008340">
    <property type="entry name" value="PRK11126.1"/>
    <property type="match status" value="1"/>
</dbReference>
<dbReference type="PANTHER" id="PTHR42916">
    <property type="entry name" value="2-SUCCINYL-5-ENOLPYRUVYL-6-HYDROXY-3-CYCLOHEXENE-1-CARBOXYLATE SYNTHASE"/>
    <property type="match status" value="1"/>
</dbReference>
<dbReference type="PANTHER" id="PTHR42916:SF1">
    <property type="entry name" value="PROTEIN PHYLLO, CHLOROPLASTIC"/>
    <property type="match status" value="1"/>
</dbReference>
<dbReference type="Pfam" id="PF12697">
    <property type="entry name" value="Abhydrolase_6"/>
    <property type="match status" value="1"/>
</dbReference>
<dbReference type="SUPFAM" id="SSF53474">
    <property type="entry name" value="alpha/beta-Hydrolases"/>
    <property type="match status" value="1"/>
</dbReference>
<name>MENH_YERPG</name>